<protein>
    <recommendedName>
        <fullName evidence="1">UvrABC system protein B</fullName>
        <shortName evidence="1">Protein UvrB</shortName>
    </recommendedName>
    <alternativeName>
        <fullName evidence="1">Excinuclease ABC subunit B</fullName>
    </alternativeName>
</protein>
<gene>
    <name evidence="1" type="primary">uvrB</name>
    <name type="ordered locus">YPK_2926</name>
</gene>
<organism>
    <name type="scientific">Yersinia pseudotuberculosis serotype O:3 (strain YPIII)</name>
    <dbReference type="NCBI Taxonomy" id="502800"/>
    <lineage>
        <taxon>Bacteria</taxon>
        <taxon>Pseudomonadati</taxon>
        <taxon>Pseudomonadota</taxon>
        <taxon>Gammaproteobacteria</taxon>
        <taxon>Enterobacterales</taxon>
        <taxon>Yersiniaceae</taxon>
        <taxon>Yersinia</taxon>
    </lineage>
</organism>
<comment type="function">
    <text evidence="1">The UvrABC repair system catalyzes the recognition and processing of DNA lesions. A damage recognition complex composed of 2 UvrA and 2 UvrB subunits scans DNA for abnormalities. Upon binding of the UvrA(2)B(2) complex to a putative damaged site, the DNA wraps around one UvrB monomer. DNA wrap is dependent on ATP binding by UvrB and probably causes local melting of the DNA helix, facilitating insertion of UvrB beta-hairpin between the DNA strands. Then UvrB probes one DNA strand for the presence of a lesion. If a lesion is found the UvrA subunits dissociate and the UvrB-DNA preincision complex is formed. This complex is subsequently bound by UvrC and the second UvrB is released. If no lesion is found, the DNA wraps around the other UvrB subunit that will check the other stand for damage.</text>
</comment>
<comment type="subunit">
    <text evidence="1">Forms a heterotetramer with UvrA during the search for lesions. Interacts with UvrC in an incision complex.</text>
</comment>
<comment type="subcellular location">
    <subcellularLocation>
        <location evidence="1">Cytoplasm</location>
    </subcellularLocation>
</comment>
<comment type="domain">
    <text evidence="1">The beta-hairpin motif is involved in DNA binding.</text>
</comment>
<comment type="similarity">
    <text evidence="1">Belongs to the UvrB family.</text>
</comment>
<accession>B1JSR9</accession>
<proteinExistence type="inferred from homology"/>
<name>UVRB_YERPY</name>
<keyword id="KW-0067">ATP-binding</keyword>
<keyword id="KW-0963">Cytoplasm</keyword>
<keyword id="KW-0227">DNA damage</keyword>
<keyword id="KW-0228">DNA excision</keyword>
<keyword id="KW-0234">DNA repair</keyword>
<keyword id="KW-0267">Excision nuclease</keyword>
<keyword id="KW-0347">Helicase</keyword>
<keyword id="KW-0378">Hydrolase</keyword>
<keyword id="KW-0547">Nucleotide-binding</keyword>
<keyword id="KW-0742">SOS response</keyword>
<sequence>MSKSFKLHSVFKPAGDQPEAIRKLEEGLENGLAHQTLLGVTGSGKTFTVANVIADLNRPTMILAPNKTLAAQLYGEMKEFFPDNAVEYFVSYYDYYQPEAYVPSSDTFIEKDASVNEHIEQMRLSATKALLERRDVVVVASVSAIYGLGDPDLYLKMMLHLTRGMIIDQRSILRRLSELQYSRNDQVFQRGTFRVRGEVIDIFPAESDEWALRVELFDEEVERLSIFDPLTGQLQHEVPRFTVYPKTHYVTPRERILQAMEEIKVELAERRQVLLANNKLLEEQRLSQRTQFDLEMMNELGYCSGIENYSRYLSGRGPGEAPPTLFDYLPADGLLIVDESHVTIPQIGGMYKGDRSRKETLVEYGFRLPSALDNRPMRFEEFEALAPQTIYVSATPGKYELEKSGGDIIEQVVRPTGLLDPLIEVRPVATQVDDLLSEIRIRAAINERVLVTTLTKRMAEDLTDYLSEHGAKVRYLHSDIDTVERVEIIRDLRLGEFDVLVGINLLREGLDMPEVSLVAILDADKEGFLRSERSLIQTIGRAARNLNGKAILYGDRITASMEKAIGETERRRAKQQAYNEERGIIPQGLNKKIGDILQLGQPSMRGKGKGRGSHKMADTTQYQSLSPKALDQKIRELEAKMYTYAQNLEFEQAAELRDQVHQLRQQFIAIS</sequence>
<feature type="chain" id="PRO_1000099583" description="UvrABC system protein B">
    <location>
        <begin position="1"/>
        <end position="671"/>
    </location>
</feature>
<feature type="domain" description="Helicase ATP-binding" evidence="1">
    <location>
        <begin position="26"/>
        <end position="183"/>
    </location>
</feature>
<feature type="domain" description="Helicase C-terminal" evidence="1">
    <location>
        <begin position="431"/>
        <end position="597"/>
    </location>
</feature>
<feature type="domain" description="UVR" evidence="1">
    <location>
        <begin position="631"/>
        <end position="666"/>
    </location>
</feature>
<feature type="short sequence motif" description="Beta-hairpin">
    <location>
        <begin position="92"/>
        <end position="115"/>
    </location>
</feature>
<feature type="binding site" evidence="1">
    <location>
        <begin position="39"/>
        <end position="46"/>
    </location>
    <ligand>
        <name>ATP</name>
        <dbReference type="ChEBI" id="CHEBI:30616"/>
    </ligand>
</feature>
<dbReference type="EMBL" id="CP000950">
    <property type="protein sequence ID" value="ACA69200.1"/>
    <property type="molecule type" value="Genomic_DNA"/>
</dbReference>
<dbReference type="RefSeq" id="WP_011191959.1">
    <property type="nucleotide sequence ID" value="NZ_CP009792.1"/>
</dbReference>
<dbReference type="SMR" id="B1JSR9"/>
<dbReference type="GeneID" id="49786740"/>
<dbReference type="KEGG" id="ypy:YPK_2926"/>
<dbReference type="PATRIC" id="fig|502800.11.peg.3647"/>
<dbReference type="GO" id="GO:0005737">
    <property type="term" value="C:cytoplasm"/>
    <property type="evidence" value="ECO:0007669"/>
    <property type="project" value="UniProtKB-SubCell"/>
</dbReference>
<dbReference type="GO" id="GO:0009380">
    <property type="term" value="C:excinuclease repair complex"/>
    <property type="evidence" value="ECO:0007669"/>
    <property type="project" value="InterPro"/>
</dbReference>
<dbReference type="GO" id="GO:0005524">
    <property type="term" value="F:ATP binding"/>
    <property type="evidence" value="ECO:0007669"/>
    <property type="project" value="UniProtKB-UniRule"/>
</dbReference>
<dbReference type="GO" id="GO:0016887">
    <property type="term" value="F:ATP hydrolysis activity"/>
    <property type="evidence" value="ECO:0007669"/>
    <property type="project" value="InterPro"/>
</dbReference>
<dbReference type="GO" id="GO:0003677">
    <property type="term" value="F:DNA binding"/>
    <property type="evidence" value="ECO:0007669"/>
    <property type="project" value="UniProtKB-UniRule"/>
</dbReference>
<dbReference type="GO" id="GO:0009381">
    <property type="term" value="F:excinuclease ABC activity"/>
    <property type="evidence" value="ECO:0007669"/>
    <property type="project" value="UniProtKB-UniRule"/>
</dbReference>
<dbReference type="GO" id="GO:0004386">
    <property type="term" value="F:helicase activity"/>
    <property type="evidence" value="ECO:0007669"/>
    <property type="project" value="UniProtKB-KW"/>
</dbReference>
<dbReference type="GO" id="GO:0006289">
    <property type="term" value="P:nucleotide-excision repair"/>
    <property type="evidence" value="ECO:0007669"/>
    <property type="project" value="UniProtKB-UniRule"/>
</dbReference>
<dbReference type="GO" id="GO:0009432">
    <property type="term" value="P:SOS response"/>
    <property type="evidence" value="ECO:0007669"/>
    <property type="project" value="UniProtKB-UniRule"/>
</dbReference>
<dbReference type="CDD" id="cd17916">
    <property type="entry name" value="DEXHc_UvrB"/>
    <property type="match status" value="1"/>
</dbReference>
<dbReference type="CDD" id="cd18790">
    <property type="entry name" value="SF2_C_UvrB"/>
    <property type="match status" value="1"/>
</dbReference>
<dbReference type="FunFam" id="3.40.50.300:FF:000257">
    <property type="entry name" value="UvrABC system protein B"/>
    <property type="match status" value="1"/>
</dbReference>
<dbReference type="FunFam" id="3.40.50.300:FF:000401">
    <property type="entry name" value="UvrABC system protein B"/>
    <property type="match status" value="1"/>
</dbReference>
<dbReference type="FunFam" id="3.40.50.300:FF:000477">
    <property type="entry name" value="UvrABC system protein B"/>
    <property type="match status" value="1"/>
</dbReference>
<dbReference type="Gene3D" id="3.40.50.300">
    <property type="entry name" value="P-loop containing nucleotide triphosphate hydrolases"/>
    <property type="match status" value="3"/>
</dbReference>
<dbReference type="Gene3D" id="4.10.860.10">
    <property type="entry name" value="UVR domain"/>
    <property type="match status" value="1"/>
</dbReference>
<dbReference type="HAMAP" id="MF_00204">
    <property type="entry name" value="UvrB"/>
    <property type="match status" value="1"/>
</dbReference>
<dbReference type="InterPro" id="IPR006935">
    <property type="entry name" value="Helicase/UvrB_N"/>
</dbReference>
<dbReference type="InterPro" id="IPR014001">
    <property type="entry name" value="Helicase_ATP-bd"/>
</dbReference>
<dbReference type="InterPro" id="IPR001650">
    <property type="entry name" value="Helicase_C-like"/>
</dbReference>
<dbReference type="InterPro" id="IPR027417">
    <property type="entry name" value="P-loop_NTPase"/>
</dbReference>
<dbReference type="InterPro" id="IPR001943">
    <property type="entry name" value="UVR_dom"/>
</dbReference>
<dbReference type="InterPro" id="IPR036876">
    <property type="entry name" value="UVR_dom_sf"/>
</dbReference>
<dbReference type="InterPro" id="IPR004807">
    <property type="entry name" value="UvrB"/>
</dbReference>
<dbReference type="InterPro" id="IPR041471">
    <property type="entry name" value="UvrB_inter"/>
</dbReference>
<dbReference type="InterPro" id="IPR024759">
    <property type="entry name" value="UvrB_YAD/RRR_dom"/>
</dbReference>
<dbReference type="NCBIfam" id="NF003673">
    <property type="entry name" value="PRK05298.1"/>
    <property type="match status" value="1"/>
</dbReference>
<dbReference type="NCBIfam" id="TIGR00631">
    <property type="entry name" value="uvrb"/>
    <property type="match status" value="1"/>
</dbReference>
<dbReference type="PANTHER" id="PTHR24029">
    <property type="entry name" value="UVRABC SYSTEM PROTEIN B"/>
    <property type="match status" value="1"/>
</dbReference>
<dbReference type="PANTHER" id="PTHR24029:SF0">
    <property type="entry name" value="UVRABC SYSTEM PROTEIN B"/>
    <property type="match status" value="1"/>
</dbReference>
<dbReference type="Pfam" id="PF00271">
    <property type="entry name" value="Helicase_C"/>
    <property type="match status" value="1"/>
</dbReference>
<dbReference type="Pfam" id="PF04851">
    <property type="entry name" value="ResIII"/>
    <property type="match status" value="1"/>
</dbReference>
<dbReference type="Pfam" id="PF02151">
    <property type="entry name" value="UVR"/>
    <property type="match status" value="1"/>
</dbReference>
<dbReference type="Pfam" id="PF12344">
    <property type="entry name" value="UvrB"/>
    <property type="match status" value="1"/>
</dbReference>
<dbReference type="Pfam" id="PF17757">
    <property type="entry name" value="UvrB_inter"/>
    <property type="match status" value="1"/>
</dbReference>
<dbReference type="SMART" id="SM00487">
    <property type="entry name" value="DEXDc"/>
    <property type="match status" value="1"/>
</dbReference>
<dbReference type="SMART" id="SM00490">
    <property type="entry name" value="HELICc"/>
    <property type="match status" value="1"/>
</dbReference>
<dbReference type="SUPFAM" id="SSF46600">
    <property type="entry name" value="C-terminal UvrC-binding domain of UvrB"/>
    <property type="match status" value="1"/>
</dbReference>
<dbReference type="SUPFAM" id="SSF52540">
    <property type="entry name" value="P-loop containing nucleoside triphosphate hydrolases"/>
    <property type="match status" value="2"/>
</dbReference>
<dbReference type="PROSITE" id="PS51192">
    <property type="entry name" value="HELICASE_ATP_BIND_1"/>
    <property type="match status" value="1"/>
</dbReference>
<dbReference type="PROSITE" id="PS51194">
    <property type="entry name" value="HELICASE_CTER"/>
    <property type="match status" value="1"/>
</dbReference>
<dbReference type="PROSITE" id="PS50151">
    <property type="entry name" value="UVR"/>
    <property type="match status" value="1"/>
</dbReference>
<evidence type="ECO:0000255" key="1">
    <source>
        <dbReference type="HAMAP-Rule" id="MF_00204"/>
    </source>
</evidence>
<reference key="1">
    <citation type="submission" date="2008-02" db="EMBL/GenBank/DDBJ databases">
        <title>Complete sequence of Yersinia pseudotuberculosis YPIII.</title>
        <authorList>
            <consortium name="US DOE Joint Genome Institute"/>
            <person name="Copeland A."/>
            <person name="Lucas S."/>
            <person name="Lapidus A."/>
            <person name="Glavina del Rio T."/>
            <person name="Dalin E."/>
            <person name="Tice H."/>
            <person name="Bruce D."/>
            <person name="Goodwin L."/>
            <person name="Pitluck S."/>
            <person name="Munk A.C."/>
            <person name="Brettin T."/>
            <person name="Detter J.C."/>
            <person name="Han C."/>
            <person name="Tapia R."/>
            <person name="Schmutz J."/>
            <person name="Larimer F."/>
            <person name="Land M."/>
            <person name="Hauser L."/>
            <person name="Challacombe J.F."/>
            <person name="Green L."/>
            <person name="Lindler L.E."/>
            <person name="Nikolich M.P."/>
            <person name="Richardson P."/>
        </authorList>
    </citation>
    <scope>NUCLEOTIDE SEQUENCE [LARGE SCALE GENOMIC DNA]</scope>
    <source>
        <strain>YPIII</strain>
    </source>
</reference>